<dbReference type="EMBL" id="CP000413">
    <property type="protein sequence ID" value="ABJ60177.1"/>
    <property type="molecule type" value="Genomic_DNA"/>
</dbReference>
<dbReference type="RefSeq" id="WP_003647505.1">
    <property type="nucleotide sequence ID" value="NZ_WBMG01000005.1"/>
</dbReference>
<dbReference type="SMR" id="Q044E5"/>
<dbReference type="GeneID" id="83570158"/>
<dbReference type="KEGG" id="lga:LGAS_0786"/>
<dbReference type="HOGENOM" id="CLU_100590_5_0_9"/>
<dbReference type="BioCyc" id="LGAS324831:G1G6Y-780-MONOMER"/>
<dbReference type="Proteomes" id="UP000000664">
    <property type="component" value="Chromosome"/>
</dbReference>
<dbReference type="GO" id="GO:0005737">
    <property type="term" value="C:cytoplasm"/>
    <property type="evidence" value="ECO:0007669"/>
    <property type="project" value="UniProtKB-ARBA"/>
</dbReference>
<dbReference type="GO" id="GO:0015935">
    <property type="term" value="C:small ribosomal subunit"/>
    <property type="evidence" value="ECO:0007669"/>
    <property type="project" value="TreeGrafter"/>
</dbReference>
<dbReference type="GO" id="GO:0003735">
    <property type="term" value="F:structural constituent of ribosome"/>
    <property type="evidence" value="ECO:0007669"/>
    <property type="project" value="InterPro"/>
</dbReference>
<dbReference type="GO" id="GO:0006412">
    <property type="term" value="P:translation"/>
    <property type="evidence" value="ECO:0007669"/>
    <property type="project" value="UniProtKB-UniRule"/>
</dbReference>
<dbReference type="FunFam" id="3.30.1320.10:FF:000002">
    <property type="entry name" value="30S ribosomal protein S16"/>
    <property type="match status" value="1"/>
</dbReference>
<dbReference type="Gene3D" id="3.30.1320.10">
    <property type="match status" value="1"/>
</dbReference>
<dbReference type="HAMAP" id="MF_00385">
    <property type="entry name" value="Ribosomal_bS16"/>
    <property type="match status" value="1"/>
</dbReference>
<dbReference type="InterPro" id="IPR000307">
    <property type="entry name" value="Ribosomal_bS16"/>
</dbReference>
<dbReference type="InterPro" id="IPR023803">
    <property type="entry name" value="Ribosomal_bS16_dom_sf"/>
</dbReference>
<dbReference type="NCBIfam" id="TIGR00002">
    <property type="entry name" value="S16"/>
    <property type="match status" value="1"/>
</dbReference>
<dbReference type="PANTHER" id="PTHR12919">
    <property type="entry name" value="30S RIBOSOMAL PROTEIN S16"/>
    <property type="match status" value="1"/>
</dbReference>
<dbReference type="PANTHER" id="PTHR12919:SF20">
    <property type="entry name" value="SMALL RIBOSOMAL SUBUNIT PROTEIN BS16M"/>
    <property type="match status" value="1"/>
</dbReference>
<dbReference type="Pfam" id="PF00886">
    <property type="entry name" value="Ribosomal_S16"/>
    <property type="match status" value="1"/>
</dbReference>
<dbReference type="SUPFAM" id="SSF54565">
    <property type="entry name" value="Ribosomal protein S16"/>
    <property type="match status" value="1"/>
</dbReference>
<evidence type="ECO:0000255" key="1">
    <source>
        <dbReference type="HAMAP-Rule" id="MF_00385"/>
    </source>
</evidence>
<evidence type="ECO:0000305" key="2"/>
<name>RS16_LACGA</name>
<organism>
    <name type="scientific">Lactobacillus gasseri (strain ATCC 33323 / DSM 20243 / BCRC 14619 / CIP 102991 / JCM 1131 / KCTC 3163 / NCIMB 11718 / NCTC 13722 / AM63)</name>
    <dbReference type="NCBI Taxonomy" id="324831"/>
    <lineage>
        <taxon>Bacteria</taxon>
        <taxon>Bacillati</taxon>
        <taxon>Bacillota</taxon>
        <taxon>Bacilli</taxon>
        <taxon>Lactobacillales</taxon>
        <taxon>Lactobacillaceae</taxon>
        <taxon>Lactobacillus</taxon>
    </lineage>
</organism>
<gene>
    <name evidence="1" type="primary">rpsP</name>
    <name type="ordered locus">LGAS_0786</name>
</gene>
<accession>Q044E5</accession>
<comment type="similarity">
    <text evidence="1">Belongs to the bacterial ribosomal protein bS16 family.</text>
</comment>
<protein>
    <recommendedName>
        <fullName evidence="1">Small ribosomal subunit protein bS16</fullName>
    </recommendedName>
    <alternativeName>
        <fullName evidence="2">30S ribosomal protein S16</fullName>
    </alternativeName>
</protein>
<feature type="chain" id="PRO_1000049276" description="Small ribosomal subunit protein bS16">
    <location>
        <begin position="1"/>
        <end position="90"/>
    </location>
</feature>
<proteinExistence type="inferred from homology"/>
<sequence>MSVKIRMRRMGSKRKPFYRIVVADSRMPRDGRFIEEVGYYNPLTNPDEVKLEEDKIFEWLEKGAQPSDTVRSLLSKAGLMTRYHDAKYGK</sequence>
<keyword id="KW-0687">Ribonucleoprotein</keyword>
<keyword id="KW-0689">Ribosomal protein</keyword>
<reference key="1">
    <citation type="journal article" date="2006" name="Proc. Natl. Acad. Sci. U.S.A.">
        <title>Comparative genomics of the lactic acid bacteria.</title>
        <authorList>
            <person name="Makarova K.S."/>
            <person name="Slesarev A."/>
            <person name="Wolf Y.I."/>
            <person name="Sorokin A."/>
            <person name="Mirkin B."/>
            <person name="Koonin E.V."/>
            <person name="Pavlov A."/>
            <person name="Pavlova N."/>
            <person name="Karamychev V."/>
            <person name="Polouchine N."/>
            <person name="Shakhova V."/>
            <person name="Grigoriev I."/>
            <person name="Lou Y."/>
            <person name="Rohksar D."/>
            <person name="Lucas S."/>
            <person name="Huang K."/>
            <person name="Goodstein D.M."/>
            <person name="Hawkins T."/>
            <person name="Plengvidhya V."/>
            <person name="Welker D."/>
            <person name="Hughes J."/>
            <person name="Goh Y."/>
            <person name="Benson A."/>
            <person name="Baldwin K."/>
            <person name="Lee J.-H."/>
            <person name="Diaz-Muniz I."/>
            <person name="Dosti B."/>
            <person name="Smeianov V."/>
            <person name="Wechter W."/>
            <person name="Barabote R."/>
            <person name="Lorca G."/>
            <person name="Altermann E."/>
            <person name="Barrangou R."/>
            <person name="Ganesan B."/>
            <person name="Xie Y."/>
            <person name="Rawsthorne H."/>
            <person name="Tamir D."/>
            <person name="Parker C."/>
            <person name="Breidt F."/>
            <person name="Broadbent J.R."/>
            <person name="Hutkins R."/>
            <person name="O'Sullivan D."/>
            <person name="Steele J."/>
            <person name="Unlu G."/>
            <person name="Saier M.H. Jr."/>
            <person name="Klaenhammer T."/>
            <person name="Richardson P."/>
            <person name="Kozyavkin S."/>
            <person name="Weimer B.C."/>
            <person name="Mills D.A."/>
        </authorList>
    </citation>
    <scope>NUCLEOTIDE SEQUENCE [LARGE SCALE GENOMIC DNA]</scope>
    <source>
        <strain>ATCC 33323 / DSM 20243 / BCRC 14619 / CIP 102991 / JCM 1131 / KCTC 3163 / NCIMB 11718 / NCTC 13722 / AM63</strain>
    </source>
</reference>